<sequence>MPEGKIIKALSGFYYVLDESQESGKVVQCRARGIFRKNKITPLVGDYVVYQADNDKEGYLLEVKERTNELVRPPISNVDQAVLVFSAAEPTFSTSLLDRFLVLVEANHIEPIICITKMDLLKTDEERETIMAYADDYRQIGYEVHLTSTIEGDGIEKLTPHFHNKITVFAGQSGVGKSSLLNAMSPELALKTDDISSHLGRGKHTTRHVELIRTANGLIADTPGFSSLEFTGIEAEDLGLYFLDIRDRSGDCKFRGCLHVKEPGCAIKDAVEHDQIKEYRYQHYLEFLTEIKDRKPRY</sequence>
<evidence type="ECO:0000255" key="1">
    <source>
        <dbReference type="HAMAP-Rule" id="MF_01820"/>
    </source>
</evidence>
<evidence type="ECO:0000255" key="2">
    <source>
        <dbReference type="PROSITE-ProRule" id="PRU01058"/>
    </source>
</evidence>
<accession>A8FD43</accession>
<proteinExistence type="inferred from homology"/>
<feature type="chain" id="PRO_1000188033" description="Small ribosomal subunit biogenesis GTPase RsgA">
    <location>
        <begin position="1"/>
        <end position="298"/>
    </location>
</feature>
<feature type="domain" description="CP-type G" evidence="2">
    <location>
        <begin position="67"/>
        <end position="228"/>
    </location>
</feature>
<feature type="binding site" evidence="1">
    <location>
        <begin position="116"/>
        <end position="119"/>
    </location>
    <ligand>
        <name>GTP</name>
        <dbReference type="ChEBI" id="CHEBI:37565"/>
    </ligand>
</feature>
<feature type="binding site" evidence="1">
    <location>
        <begin position="171"/>
        <end position="179"/>
    </location>
    <ligand>
        <name>GTP</name>
        <dbReference type="ChEBI" id="CHEBI:37565"/>
    </ligand>
</feature>
<feature type="binding site" evidence="1">
    <location>
        <position position="252"/>
    </location>
    <ligand>
        <name>Zn(2+)</name>
        <dbReference type="ChEBI" id="CHEBI:29105"/>
    </ligand>
</feature>
<feature type="binding site" evidence="1">
    <location>
        <position position="257"/>
    </location>
    <ligand>
        <name>Zn(2+)</name>
        <dbReference type="ChEBI" id="CHEBI:29105"/>
    </ligand>
</feature>
<feature type="binding site" evidence="1">
    <location>
        <position position="259"/>
    </location>
    <ligand>
        <name>Zn(2+)</name>
        <dbReference type="ChEBI" id="CHEBI:29105"/>
    </ligand>
</feature>
<feature type="binding site" evidence="1">
    <location>
        <position position="265"/>
    </location>
    <ligand>
        <name>Zn(2+)</name>
        <dbReference type="ChEBI" id="CHEBI:29105"/>
    </ligand>
</feature>
<gene>
    <name evidence="1" type="primary">rsgA</name>
    <name type="ordered locus">BPUM_1477</name>
</gene>
<comment type="function">
    <text evidence="1">One of several proteins that assist in the late maturation steps of the functional core of the 30S ribosomal subunit. Helps release RbfA from mature subunits. May play a role in the assembly of ribosomal proteins into the subunit. Circularly permuted GTPase that catalyzes slow GTP hydrolysis, GTPase activity is stimulated by the 30S ribosomal subunit.</text>
</comment>
<comment type="cofactor">
    <cofactor evidence="1">
        <name>Zn(2+)</name>
        <dbReference type="ChEBI" id="CHEBI:29105"/>
    </cofactor>
    <text evidence="1">Binds 1 zinc ion per subunit.</text>
</comment>
<comment type="subunit">
    <text evidence="1">Monomer. Associates with 30S ribosomal subunit, binds 16S rRNA.</text>
</comment>
<comment type="subcellular location">
    <subcellularLocation>
        <location evidence="1">Cytoplasm</location>
    </subcellularLocation>
</comment>
<comment type="similarity">
    <text evidence="1">Belongs to the TRAFAC class YlqF/YawG GTPase family. RsgA subfamily.</text>
</comment>
<dbReference type="EC" id="3.6.1.-" evidence="1"/>
<dbReference type="EMBL" id="CP000813">
    <property type="protein sequence ID" value="ABV62160.1"/>
    <property type="molecule type" value="Genomic_DNA"/>
</dbReference>
<dbReference type="RefSeq" id="WP_012009920.1">
    <property type="nucleotide sequence ID" value="NC_009848.4"/>
</dbReference>
<dbReference type="SMR" id="A8FD43"/>
<dbReference type="STRING" id="315750.BPUM_1477"/>
<dbReference type="GeneID" id="5620740"/>
<dbReference type="KEGG" id="bpu:BPUM_1477"/>
<dbReference type="eggNOG" id="COG1162">
    <property type="taxonomic scope" value="Bacteria"/>
</dbReference>
<dbReference type="HOGENOM" id="CLU_033617_2_1_9"/>
<dbReference type="OrthoDB" id="9809485at2"/>
<dbReference type="Proteomes" id="UP000001355">
    <property type="component" value="Chromosome"/>
</dbReference>
<dbReference type="GO" id="GO:0005737">
    <property type="term" value="C:cytoplasm"/>
    <property type="evidence" value="ECO:0007669"/>
    <property type="project" value="UniProtKB-SubCell"/>
</dbReference>
<dbReference type="GO" id="GO:0005525">
    <property type="term" value="F:GTP binding"/>
    <property type="evidence" value="ECO:0007669"/>
    <property type="project" value="UniProtKB-UniRule"/>
</dbReference>
<dbReference type="GO" id="GO:0003924">
    <property type="term" value="F:GTPase activity"/>
    <property type="evidence" value="ECO:0007669"/>
    <property type="project" value="UniProtKB-UniRule"/>
</dbReference>
<dbReference type="GO" id="GO:0046872">
    <property type="term" value="F:metal ion binding"/>
    <property type="evidence" value="ECO:0007669"/>
    <property type="project" value="UniProtKB-KW"/>
</dbReference>
<dbReference type="GO" id="GO:0019843">
    <property type="term" value="F:rRNA binding"/>
    <property type="evidence" value="ECO:0007669"/>
    <property type="project" value="UniProtKB-KW"/>
</dbReference>
<dbReference type="GO" id="GO:0042274">
    <property type="term" value="P:ribosomal small subunit biogenesis"/>
    <property type="evidence" value="ECO:0007669"/>
    <property type="project" value="UniProtKB-UniRule"/>
</dbReference>
<dbReference type="CDD" id="cd04466">
    <property type="entry name" value="S1_YloQ_GTPase"/>
    <property type="match status" value="1"/>
</dbReference>
<dbReference type="CDD" id="cd01854">
    <property type="entry name" value="YjeQ_EngC"/>
    <property type="match status" value="1"/>
</dbReference>
<dbReference type="Gene3D" id="2.40.50.140">
    <property type="entry name" value="Nucleic acid-binding proteins"/>
    <property type="match status" value="1"/>
</dbReference>
<dbReference type="Gene3D" id="3.40.50.300">
    <property type="entry name" value="P-loop containing nucleotide triphosphate hydrolases"/>
    <property type="match status" value="1"/>
</dbReference>
<dbReference type="Gene3D" id="1.10.40.50">
    <property type="entry name" value="Probable gtpase engc, domain 3"/>
    <property type="match status" value="1"/>
</dbReference>
<dbReference type="HAMAP" id="MF_01820">
    <property type="entry name" value="GTPase_RsgA"/>
    <property type="match status" value="1"/>
</dbReference>
<dbReference type="InterPro" id="IPR030378">
    <property type="entry name" value="G_CP_dom"/>
</dbReference>
<dbReference type="InterPro" id="IPR012340">
    <property type="entry name" value="NA-bd_OB-fold"/>
</dbReference>
<dbReference type="InterPro" id="IPR027417">
    <property type="entry name" value="P-loop_NTPase"/>
</dbReference>
<dbReference type="InterPro" id="IPR004881">
    <property type="entry name" value="Ribosome_biogen_GTPase_RsgA"/>
</dbReference>
<dbReference type="InterPro" id="IPR010914">
    <property type="entry name" value="RsgA_GTPase_dom"/>
</dbReference>
<dbReference type="InterPro" id="IPR031944">
    <property type="entry name" value="RsgA_N"/>
</dbReference>
<dbReference type="NCBIfam" id="TIGR00157">
    <property type="entry name" value="ribosome small subunit-dependent GTPase A"/>
    <property type="match status" value="1"/>
</dbReference>
<dbReference type="PANTHER" id="PTHR32120">
    <property type="entry name" value="SMALL RIBOSOMAL SUBUNIT BIOGENESIS GTPASE RSGA"/>
    <property type="match status" value="1"/>
</dbReference>
<dbReference type="PANTHER" id="PTHR32120:SF11">
    <property type="entry name" value="SMALL RIBOSOMAL SUBUNIT BIOGENESIS GTPASE RSGA 1, MITOCHONDRIAL-RELATED"/>
    <property type="match status" value="1"/>
</dbReference>
<dbReference type="Pfam" id="PF03193">
    <property type="entry name" value="RsgA_GTPase"/>
    <property type="match status" value="1"/>
</dbReference>
<dbReference type="Pfam" id="PF16745">
    <property type="entry name" value="RsgA_N"/>
    <property type="match status" value="1"/>
</dbReference>
<dbReference type="SUPFAM" id="SSF50249">
    <property type="entry name" value="Nucleic acid-binding proteins"/>
    <property type="match status" value="1"/>
</dbReference>
<dbReference type="SUPFAM" id="SSF52540">
    <property type="entry name" value="P-loop containing nucleoside triphosphate hydrolases"/>
    <property type="match status" value="1"/>
</dbReference>
<dbReference type="PROSITE" id="PS50936">
    <property type="entry name" value="ENGC_GTPASE"/>
    <property type="match status" value="1"/>
</dbReference>
<dbReference type="PROSITE" id="PS51721">
    <property type="entry name" value="G_CP"/>
    <property type="match status" value="1"/>
</dbReference>
<organism>
    <name type="scientific">Bacillus pumilus (strain SAFR-032)</name>
    <dbReference type="NCBI Taxonomy" id="315750"/>
    <lineage>
        <taxon>Bacteria</taxon>
        <taxon>Bacillati</taxon>
        <taxon>Bacillota</taxon>
        <taxon>Bacilli</taxon>
        <taxon>Bacillales</taxon>
        <taxon>Bacillaceae</taxon>
        <taxon>Bacillus</taxon>
    </lineage>
</organism>
<protein>
    <recommendedName>
        <fullName evidence="1">Small ribosomal subunit biogenesis GTPase RsgA</fullName>
        <ecNumber evidence="1">3.6.1.-</ecNumber>
    </recommendedName>
</protein>
<keyword id="KW-0963">Cytoplasm</keyword>
<keyword id="KW-0342">GTP-binding</keyword>
<keyword id="KW-0378">Hydrolase</keyword>
<keyword id="KW-0479">Metal-binding</keyword>
<keyword id="KW-0547">Nucleotide-binding</keyword>
<keyword id="KW-0690">Ribosome biogenesis</keyword>
<keyword id="KW-0694">RNA-binding</keyword>
<keyword id="KW-0699">rRNA-binding</keyword>
<keyword id="KW-0862">Zinc</keyword>
<reference key="1">
    <citation type="journal article" date="2007" name="PLoS ONE">
        <title>Paradoxical DNA repair and peroxide resistance gene conservation in Bacillus pumilus SAFR-032.</title>
        <authorList>
            <person name="Gioia J."/>
            <person name="Yerrapragada S."/>
            <person name="Qin X."/>
            <person name="Jiang H."/>
            <person name="Igboeli O.C."/>
            <person name="Muzny D."/>
            <person name="Dugan-Rocha S."/>
            <person name="Ding Y."/>
            <person name="Hawes A."/>
            <person name="Liu W."/>
            <person name="Perez L."/>
            <person name="Kovar C."/>
            <person name="Dinh H."/>
            <person name="Lee S."/>
            <person name="Nazareth L."/>
            <person name="Blyth P."/>
            <person name="Holder M."/>
            <person name="Buhay C."/>
            <person name="Tirumalai M.R."/>
            <person name="Liu Y."/>
            <person name="Dasgupta I."/>
            <person name="Bokhetache L."/>
            <person name="Fujita M."/>
            <person name="Karouia F."/>
            <person name="Eswara Moorthy P."/>
            <person name="Siefert J."/>
            <person name="Uzman A."/>
            <person name="Buzumbo P."/>
            <person name="Verma A."/>
            <person name="Zwiya H."/>
            <person name="McWilliams B.D."/>
            <person name="Olowu A."/>
            <person name="Clinkenbeard K.D."/>
            <person name="Newcombe D."/>
            <person name="Golebiewski L."/>
            <person name="Petrosino J.F."/>
            <person name="Nicholson W.L."/>
            <person name="Fox G.E."/>
            <person name="Venkateswaran K."/>
            <person name="Highlander S.K."/>
            <person name="Weinstock G.M."/>
        </authorList>
    </citation>
    <scope>NUCLEOTIDE SEQUENCE [LARGE SCALE GENOMIC DNA]</scope>
    <source>
        <strain>SAFR-032</strain>
    </source>
</reference>
<name>RSGA_BACP2</name>